<reference key="1">
    <citation type="journal article" date="2003" name="Nature">
        <title>Genome sequence of Bacillus cereus and comparative analysis with Bacillus anthracis.</title>
        <authorList>
            <person name="Ivanova N."/>
            <person name="Sorokin A."/>
            <person name="Anderson I."/>
            <person name="Galleron N."/>
            <person name="Candelon B."/>
            <person name="Kapatral V."/>
            <person name="Bhattacharyya A."/>
            <person name="Reznik G."/>
            <person name="Mikhailova N."/>
            <person name="Lapidus A."/>
            <person name="Chu L."/>
            <person name="Mazur M."/>
            <person name="Goltsman E."/>
            <person name="Larsen N."/>
            <person name="D'Souza M."/>
            <person name="Walunas T."/>
            <person name="Grechkin Y."/>
            <person name="Pusch G."/>
            <person name="Haselkorn R."/>
            <person name="Fonstein M."/>
            <person name="Ehrlich S.D."/>
            <person name="Overbeek R."/>
            <person name="Kyrpides N.C."/>
        </authorList>
    </citation>
    <scope>NUCLEOTIDE SEQUENCE [LARGE SCALE GENOMIC DNA]</scope>
    <source>
        <strain>ATCC 14579 / DSM 31 / CCUG 7414 / JCM 2152 / NBRC 15305 / NCIMB 9373 / NCTC 2599 / NRRL B-3711</strain>
    </source>
</reference>
<name>DNLJ_BACCR</name>
<dbReference type="EC" id="6.5.1.2" evidence="1"/>
<dbReference type="EMBL" id="AE016877">
    <property type="protein sequence ID" value="AAP07381.1"/>
    <property type="molecule type" value="Genomic_DNA"/>
</dbReference>
<dbReference type="RefSeq" id="NP_830180.1">
    <property type="nucleotide sequence ID" value="NC_004722.1"/>
</dbReference>
<dbReference type="RefSeq" id="WP_000031450.1">
    <property type="nucleotide sequence ID" value="NZ_CP138336.1"/>
</dbReference>
<dbReference type="SMR" id="Q81IP2"/>
<dbReference type="STRING" id="226900.BC_0341"/>
<dbReference type="KEGG" id="bce:BC0341"/>
<dbReference type="PATRIC" id="fig|226900.8.peg.312"/>
<dbReference type="HOGENOM" id="CLU_007764_2_1_9"/>
<dbReference type="OrthoDB" id="9759736at2"/>
<dbReference type="Proteomes" id="UP000001417">
    <property type="component" value="Chromosome"/>
</dbReference>
<dbReference type="GO" id="GO:0005829">
    <property type="term" value="C:cytosol"/>
    <property type="evidence" value="ECO:0000318"/>
    <property type="project" value="GO_Central"/>
</dbReference>
<dbReference type="GO" id="GO:0003677">
    <property type="term" value="F:DNA binding"/>
    <property type="evidence" value="ECO:0007669"/>
    <property type="project" value="InterPro"/>
</dbReference>
<dbReference type="GO" id="GO:0003911">
    <property type="term" value="F:DNA ligase (NAD+) activity"/>
    <property type="evidence" value="ECO:0000318"/>
    <property type="project" value="GO_Central"/>
</dbReference>
<dbReference type="GO" id="GO:0046872">
    <property type="term" value="F:metal ion binding"/>
    <property type="evidence" value="ECO:0007669"/>
    <property type="project" value="UniProtKB-KW"/>
</dbReference>
<dbReference type="GO" id="GO:0006281">
    <property type="term" value="P:DNA repair"/>
    <property type="evidence" value="ECO:0007669"/>
    <property type="project" value="UniProtKB-KW"/>
</dbReference>
<dbReference type="GO" id="GO:0006260">
    <property type="term" value="P:DNA replication"/>
    <property type="evidence" value="ECO:0007669"/>
    <property type="project" value="UniProtKB-KW"/>
</dbReference>
<dbReference type="CDD" id="cd17748">
    <property type="entry name" value="BRCT_DNA_ligase_like"/>
    <property type="match status" value="1"/>
</dbReference>
<dbReference type="CDD" id="cd00114">
    <property type="entry name" value="LIGANc"/>
    <property type="match status" value="1"/>
</dbReference>
<dbReference type="FunFam" id="1.10.150.20:FF:000006">
    <property type="entry name" value="DNA ligase"/>
    <property type="match status" value="1"/>
</dbReference>
<dbReference type="FunFam" id="1.10.150.20:FF:000007">
    <property type="entry name" value="DNA ligase"/>
    <property type="match status" value="1"/>
</dbReference>
<dbReference type="FunFam" id="1.10.287.610:FF:000002">
    <property type="entry name" value="DNA ligase"/>
    <property type="match status" value="1"/>
</dbReference>
<dbReference type="FunFam" id="2.40.50.140:FF:000012">
    <property type="entry name" value="DNA ligase"/>
    <property type="match status" value="1"/>
</dbReference>
<dbReference type="FunFam" id="3.30.470.30:FF:000001">
    <property type="entry name" value="DNA ligase"/>
    <property type="match status" value="1"/>
</dbReference>
<dbReference type="FunFam" id="3.40.50.10190:FF:000026">
    <property type="entry name" value="DNA ligase"/>
    <property type="match status" value="1"/>
</dbReference>
<dbReference type="FunFam" id="6.20.10.30:FF:000002">
    <property type="entry name" value="DNA ligase"/>
    <property type="match status" value="1"/>
</dbReference>
<dbReference type="Gene3D" id="6.20.10.30">
    <property type="match status" value="1"/>
</dbReference>
<dbReference type="Gene3D" id="1.10.150.20">
    <property type="entry name" value="5' to 3' exonuclease, C-terminal subdomain"/>
    <property type="match status" value="2"/>
</dbReference>
<dbReference type="Gene3D" id="3.40.50.10190">
    <property type="entry name" value="BRCT domain"/>
    <property type="match status" value="1"/>
</dbReference>
<dbReference type="Gene3D" id="3.30.470.30">
    <property type="entry name" value="DNA ligase/mRNA capping enzyme"/>
    <property type="match status" value="1"/>
</dbReference>
<dbReference type="Gene3D" id="1.10.287.610">
    <property type="entry name" value="Helix hairpin bin"/>
    <property type="match status" value="1"/>
</dbReference>
<dbReference type="Gene3D" id="2.40.50.140">
    <property type="entry name" value="Nucleic acid-binding proteins"/>
    <property type="match status" value="1"/>
</dbReference>
<dbReference type="HAMAP" id="MF_01588">
    <property type="entry name" value="DNA_ligase_A"/>
    <property type="match status" value="1"/>
</dbReference>
<dbReference type="InterPro" id="IPR001357">
    <property type="entry name" value="BRCT_dom"/>
</dbReference>
<dbReference type="InterPro" id="IPR036420">
    <property type="entry name" value="BRCT_dom_sf"/>
</dbReference>
<dbReference type="InterPro" id="IPR041663">
    <property type="entry name" value="DisA/LigA_HHH"/>
</dbReference>
<dbReference type="InterPro" id="IPR001679">
    <property type="entry name" value="DNA_ligase"/>
</dbReference>
<dbReference type="InterPro" id="IPR018239">
    <property type="entry name" value="DNA_ligase_AS"/>
</dbReference>
<dbReference type="InterPro" id="IPR033136">
    <property type="entry name" value="DNA_ligase_CS"/>
</dbReference>
<dbReference type="InterPro" id="IPR013839">
    <property type="entry name" value="DNAligase_adenylation"/>
</dbReference>
<dbReference type="InterPro" id="IPR013840">
    <property type="entry name" value="DNAligase_N"/>
</dbReference>
<dbReference type="InterPro" id="IPR003583">
    <property type="entry name" value="Hlx-hairpin-Hlx_DNA-bd_motif"/>
</dbReference>
<dbReference type="InterPro" id="IPR012340">
    <property type="entry name" value="NA-bd_OB-fold"/>
</dbReference>
<dbReference type="InterPro" id="IPR004150">
    <property type="entry name" value="NAD_DNA_ligase_OB"/>
</dbReference>
<dbReference type="InterPro" id="IPR010994">
    <property type="entry name" value="RuvA_2-like"/>
</dbReference>
<dbReference type="InterPro" id="IPR004149">
    <property type="entry name" value="Znf_DNAligase_C4"/>
</dbReference>
<dbReference type="NCBIfam" id="TIGR00575">
    <property type="entry name" value="dnlj"/>
    <property type="match status" value="1"/>
</dbReference>
<dbReference type="NCBIfam" id="NF005932">
    <property type="entry name" value="PRK07956.1"/>
    <property type="match status" value="1"/>
</dbReference>
<dbReference type="PANTHER" id="PTHR23389">
    <property type="entry name" value="CHROMOSOME TRANSMISSION FIDELITY FACTOR 18"/>
    <property type="match status" value="1"/>
</dbReference>
<dbReference type="PANTHER" id="PTHR23389:SF9">
    <property type="entry name" value="DNA LIGASE"/>
    <property type="match status" value="1"/>
</dbReference>
<dbReference type="Pfam" id="PF00533">
    <property type="entry name" value="BRCT"/>
    <property type="match status" value="1"/>
</dbReference>
<dbReference type="Pfam" id="PF01653">
    <property type="entry name" value="DNA_ligase_aden"/>
    <property type="match status" value="1"/>
</dbReference>
<dbReference type="Pfam" id="PF03120">
    <property type="entry name" value="DNA_ligase_OB"/>
    <property type="match status" value="1"/>
</dbReference>
<dbReference type="Pfam" id="PF03119">
    <property type="entry name" value="DNA_ligase_ZBD"/>
    <property type="match status" value="1"/>
</dbReference>
<dbReference type="Pfam" id="PF12826">
    <property type="entry name" value="HHH_2"/>
    <property type="match status" value="1"/>
</dbReference>
<dbReference type="Pfam" id="PF14520">
    <property type="entry name" value="HHH_5"/>
    <property type="match status" value="1"/>
</dbReference>
<dbReference type="Pfam" id="PF22745">
    <property type="entry name" value="Nlig-Ia"/>
    <property type="match status" value="1"/>
</dbReference>
<dbReference type="PIRSF" id="PIRSF001604">
    <property type="entry name" value="LigA"/>
    <property type="match status" value="1"/>
</dbReference>
<dbReference type="SMART" id="SM00292">
    <property type="entry name" value="BRCT"/>
    <property type="match status" value="1"/>
</dbReference>
<dbReference type="SMART" id="SM00278">
    <property type="entry name" value="HhH1"/>
    <property type="match status" value="3"/>
</dbReference>
<dbReference type="SMART" id="SM00532">
    <property type="entry name" value="LIGANc"/>
    <property type="match status" value="1"/>
</dbReference>
<dbReference type="SUPFAM" id="SSF52113">
    <property type="entry name" value="BRCT domain"/>
    <property type="match status" value="1"/>
</dbReference>
<dbReference type="SUPFAM" id="SSF56091">
    <property type="entry name" value="DNA ligase/mRNA capping enzyme, catalytic domain"/>
    <property type="match status" value="1"/>
</dbReference>
<dbReference type="SUPFAM" id="SSF50249">
    <property type="entry name" value="Nucleic acid-binding proteins"/>
    <property type="match status" value="1"/>
</dbReference>
<dbReference type="SUPFAM" id="SSF47781">
    <property type="entry name" value="RuvA domain 2-like"/>
    <property type="match status" value="1"/>
</dbReference>
<dbReference type="PROSITE" id="PS50172">
    <property type="entry name" value="BRCT"/>
    <property type="match status" value="1"/>
</dbReference>
<dbReference type="PROSITE" id="PS01055">
    <property type="entry name" value="DNA_LIGASE_N1"/>
    <property type="match status" value="1"/>
</dbReference>
<dbReference type="PROSITE" id="PS01056">
    <property type="entry name" value="DNA_LIGASE_N2"/>
    <property type="match status" value="1"/>
</dbReference>
<comment type="function">
    <text evidence="1">DNA ligase that catalyzes the formation of phosphodiester linkages between 5'-phosphoryl and 3'-hydroxyl groups in double-stranded DNA using NAD as a coenzyme and as the energy source for the reaction. It is essential for DNA replication and repair of damaged DNA.</text>
</comment>
<comment type="catalytic activity">
    <reaction evidence="1">
        <text>NAD(+) + (deoxyribonucleotide)n-3'-hydroxyl + 5'-phospho-(deoxyribonucleotide)m = (deoxyribonucleotide)n+m + AMP + beta-nicotinamide D-nucleotide.</text>
        <dbReference type="EC" id="6.5.1.2"/>
    </reaction>
</comment>
<comment type="cofactor">
    <cofactor evidence="1">
        <name>Mg(2+)</name>
        <dbReference type="ChEBI" id="CHEBI:18420"/>
    </cofactor>
    <cofactor evidence="1">
        <name>Mn(2+)</name>
        <dbReference type="ChEBI" id="CHEBI:29035"/>
    </cofactor>
</comment>
<comment type="similarity">
    <text evidence="1">Belongs to the NAD-dependent DNA ligase family. LigA subfamily.</text>
</comment>
<sequence length="669" mass="75199">MSKEIAKKRIEELRDLLNTFNYQYHVLDNPSVSDAEYDRNMQELIKLEAENPEFMSEDSPSVRVGGTVLDIFEKVTHKSPMLSLGNAFNEGDLRDFDRRVRQGIDGANVRYICELKIDGLAVSLHYEKGRFIQGATRGDGVTGEDITQNLKTIKAIPLRLNEEVTLEARGEAYMPKRSFVKLNEEKEQNGEDVFANPRNAAAGSIRQLDPKIAAKRNLSMFVYGLANVEEKTIPSHSESLDFLGELGFKTNPNRRTCETIEEVIAYVEEWQEKRPHLDYEIDGIVIKVDDVALQESLGTTAKSPRWAIAYKFPAEEVVTRLTGIELSVGRTGVVTPTAELEPVRVAGTIVRRASLHNEDLIREKDIRIGDYVVVKKAGDIIPEVVNVIFDKRTGEEEEYRMPTHCPACESELVRLEEEVALRCINPTCPAQIREGLIHFVSRNAMNIDGLGERVITQLFDADYIRTFADLYALTKEQLLQLERFGEKSATNLIQAIENSKENSLERLLFGLGIRHVGAKAARTFAEHFETMDELVKATEEELKAINEIGEKMAQSVVTYFDNEDVLELLQQFKEYGVNMTYKGIKIADLQNVESYFAGKTVVLTGKLEVMGRSEAKKKIEALGGKVTGSVSKSTDLVVAGEAAGSKLAQAEKHNVEVWNEERFLQELNK</sequence>
<protein>
    <recommendedName>
        <fullName evidence="1">DNA ligase</fullName>
        <ecNumber evidence="1">6.5.1.2</ecNumber>
    </recommendedName>
    <alternativeName>
        <fullName evidence="1">Polydeoxyribonucleotide synthase [NAD(+)]</fullName>
    </alternativeName>
</protein>
<feature type="chain" id="PRO_0000313124" description="DNA ligase">
    <location>
        <begin position="1"/>
        <end position="669"/>
    </location>
</feature>
<feature type="domain" description="BRCT" evidence="1">
    <location>
        <begin position="591"/>
        <end position="669"/>
    </location>
</feature>
<feature type="active site" description="N6-AMP-lysine intermediate" evidence="1">
    <location>
        <position position="116"/>
    </location>
</feature>
<feature type="binding site" evidence="1">
    <location>
        <begin position="34"/>
        <end position="38"/>
    </location>
    <ligand>
        <name>NAD(+)</name>
        <dbReference type="ChEBI" id="CHEBI:57540"/>
    </ligand>
</feature>
<feature type="binding site" evidence="1">
    <location>
        <begin position="83"/>
        <end position="84"/>
    </location>
    <ligand>
        <name>NAD(+)</name>
        <dbReference type="ChEBI" id="CHEBI:57540"/>
    </ligand>
</feature>
<feature type="binding site" evidence="1">
    <location>
        <position position="114"/>
    </location>
    <ligand>
        <name>NAD(+)</name>
        <dbReference type="ChEBI" id="CHEBI:57540"/>
    </ligand>
</feature>
<feature type="binding site" evidence="1">
    <location>
        <position position="137"/>
    </location>
    <ligand>
        <name>NAD(+)</name>
        <dbReference type="ChEBI" id="CHEBI:57540"/>
    </ligand>
</feature>
<feature type="binding site" evidence="1">
    <location>
        <position position="171"/>
    </location>
    <ligand>
        <name>NAD(+)</name>
        <dbReference type="ChEBI" id="CHEBI:57540"/>
    </ligand>
</feature>
<feature type="binding site" evidence="1">
    <location>
        <position position="287"/>
    </location>
    <ligand>
        <name>NAD(+)</name>
        <dbReference type="ChEBI" id="CHEBI:57540"/>
    </ligand>
</feature>
<feature type="binding site" evidence="1">
    <location>
        <position position="311"/>
    </location>
    <ligand>
        <name>NAD(+)</name>
        <dbReference type="ChEBI" id="CHEBI:57540"/>
    </ligand>
</feature>
<feature type="binding site" evidence="1">
    <location>
        <position position="405"/>
    </location>
    <ligand>
        <name>Zn(2+)</name>
        <dbReference type="ChEBI" id="CHEBI:29105"/>
    </ligand>
</feature>
<feature type="binding site" evidence="1">
    <location>
        <position position="408"/>
    </location>
    <ligand>
        <name>Zn(2+)</name>
        <dbReference type="ChEBI" id="CHEBI:29105"/>
    </ligand>
</feature>
<feature type="binding site" evidence="1">
    <location>
        <position position="423"/>
    </location>
    <ligand>
        <name>Zn(2+)</name>
        <dbReference type="ChEBI" id="CHEBI:29105"/>
    </ligand>
</feature>
<feature type="binding site" evidence="1">
    <location>
        <position position="428"/>
    </location>
    <ligand>
        <name>Zn(2+)</name>
        <dbReference type="ChEBI" id="CHEBI:29105"/>
    </ligand>
</feature>
<evidence type="ECO:0000255" key="1">
    <source>
        <dbReference type="HAMAP-Rule" id="MF_01588"/>
    </source>
</evidence>
<organism>
    <name type="scientific">Bacillus cereus (strain ATCC 14579 / DSM 31 / CCUG 7414 / JCM 2152 / NBRC 15305 / NCIMB 9373 / NCTC 2599 / NRRL B-3711)</name>
    <dbReference type="NCBI Taxonomy" id="226900"/>
    <lineage>
        <taxon>Bacteria</taxon>
        <taxon>Bacillati</taxon>
        <taxon>Bacillota</taxon>
        <taxon>Bacilli</taxon>
        <taxon>Bacillales</taxon>
        <taxon>Bacillaceae</taxon>
        <taxon>Bacillus</taxon>
        <taxon>Bacillus cereus group</taxon>
    </lineage>
</organism>
<gene>
    <name evidence="1" type="primary">ligA</name>
    <name type="ordered locus">BC_0341</name>
</gene>
<keyword id="KW-0227">DNA damage</keyword>
<keyword id="KW-0234">DNA repair</keyword>
<keyword id="KW-0235">DNA replication</keyword>
<keyword id="KW-0436">Ligase</keyword>
<keyword id="KW-0460">Magnesium</keyword>
<keyword id="KW-0464">Manganese</keyword>
<keyword id="KW-0479">Metal-binding</keyword>
<keyword id="KW-0520">NAD</keyword>
<keyword id="KW-1185">Reference proteome</keyword>
<keyword id="KW-0862">Zinc</keyword>
<accession>Q81IP2</accession>
<proteinExistence type="inferred from homology"/>